<protein>
    <recommendedName>
        <fullName evidence="7 8">Basic phospholipase A2 homolog BaTX</fullName>
        <shortName>svPLA2 homolog</shortName>
    </recommendedName>
</protein>
<feature type="chain" id="PRO_0000392638" description="Basic phospholipase A2 homolog BaTX">
    <location>
        <begin position="1"/>
        <end position="121"/>
    </location>
</feature>
<feature type="region of interest" description="Important for membrane-damaging activities in eukaryotes and bacteria; heparin-binding" evidence="2">
    <location>
        <begin position="105"/>
        <end position="117"/>
    </location>
</feature>
<feature type="site" description="Important residue of the cationic membrane-docking site (MDoS)" evidence="1">
    <location>
        <position position="105"/>
    </location>
</feature>
<feature type="site" description="Important residue of the cationic membrane-docking site (MDoS)" evidence="1">
    <location>
        <position position="108"/>
    </location>
</feature>
<feature type="site" description="Hydrophobic membrane-disruption site (MDiS)" evidence="1">
    <location>
        <position position="111"/>
    </location>
</feature>
<feature type="site" description="Cationic membrane-docking site (MDoS)" evidence="1">
    <location>
        <position position="112"/>
    </location>
</feature>
<feature type="site" description="Hydrophobic membrane-disruption site (MDiS)" evidence="1">
    <location>
        <position position="114"/>
    </location>
</feature>
<feature type="site" description="Cationic membrane-docking site (MDoS)" evidence="1">
    <location>
        <position position="117"/>
    </location>
</feature>
<feature type="disulfide bond" evidence="3">
    <location>
        <begin position="26"/>
        <end position="115"/>
    </location>
</feature>
<feature type="disulfide bond" evidence="3">
    <location>
        <begin position="28"/>
        <end position="44"/>
    </location>
</feature>
<feature type="disulfide bond" evidence="3">
    <location>
        <begin position="43"/>
        <end position="95"/>
    </location>
</feature>
<feature type="disulfide bond" evidence="3">
    <location>
        <begin position="49"/>
        <end position="121"/>
    </location>
</feature>
<feature type="disulfide bond" evidence="3">
    <location>
        <begin position="50"/>
        <end position="88"/>
    </location>
</feature>
<feature type="disulfide bond" evidence="3">
    <location>
        <begin position="57"/>
        <end position="81"/>
    </location>
</feature>
<feature type="disulfide bond" evidence="3">
    <location>
        <begin position="75"/>
        <end position="86"/>
    </location>
</feature>
<evidence type="ECO:0000250" key="1">
    <source>
        <dbReference type="UniProtKB" id="I6L8L6"/>
    </source>
</evidence>
<evidence type="ECO:0000250" key="2">
    <source>
        <dbReference type="UniProtKB" id="P24605"/>
    </source>
</evidence>
<evidence type="ECO:0000250" key="3">
    <source>
        <dbReference type="UniProtKB" id="Q90249"/>
    </source>
</evidence>
<evidence type="ECO:0000269" key="4">
    <source>
    </source>
</evidence>
<evidence type="ECO:0000269" key="5">
    <source>
    </source>
</evidence>
<evidence type="ECO:0000269" key="6">
    <source>
    </source>
</evidence>
<evidence type="ECO:0000303" key="7">
    <source>
    </source>
</evidence>
<evidence type="ECO:0000303" key="8">
    <source>
    </source>
</evidence>
<evidence type="ECO:0000305" key="9"/>
<evidence type="ECO:0000305" key="10">
    <source>
    </source>
</evidence>
<evidence type="ECO:0000305" key="11">
    <source>
    </source>
</evidence>
<accession>P86453</accession>
<dbReference type="SMR" id="P86453"/>
<dbReference type="BRENDA" id="3.1.1.4">
    <property type="organism ID" value="6825"/>
</dbReference>
<dbReference type="GO" id="GO:0005576">
    <property type="term" value="C:extracellular region"/>
    <property type="evidence" value="ECO:0000314"/>
    <property type="project" value="UniProtKB"/>
</dbReference>
<dbReference type="GO" id="GO:0005509">
    <property type="term" value="F:calcium ion binding"/>
    <property type="evidence" value="ECO:0007669"/>
    <property type="project" value="InterPro"/>
</dbReference>
<dbReference type="GO" id="GO:0005543">
    <property type="term" value="F:phospholipid binding"/>
    <property type="evidence" value="ECO:0007669"/>
    <property type="project" value="TreeGrafter"/>
</dbReference>
<dbReference type="GO" id="GO:0090729">
    <property type="term" value="F:toxin activity"/>
    <property type="evidence" value="ECO:0000314"/>
    <property type="project" value="UniProtKB"/>
</dbReference>
<dbReference type="GO" id="GO:0050482">
    <property type="term" value="P:arachidonate secretion"/>
    <property type="evidence" value="ECO:0007669"/>
    <property type="project" value="InterPro"/>
</dbReference>
<dbReference type="GO" id="GO:0016042">
    <property type="term" value="P:lipid catabolic process"/>
    <property type="evidence" value="ECO:0007669"/>
    <property type="project" value="InterPro"/>
</dbReference>
<dbReference type="GO" id="GO:0045932">
    <property type="term" value="P:negative regulation of muscle contraction"/>
    <property type="evidence" value="ECO:0000314"/>
    <property type="project" value="UniProtKB"/>
</dbReference>
<dbReference type="GO" id="GO:0042130">
    <property type="term" value="P:negative regulation of T cell proliferation"/>
    <property type="evidence" value="ECO:0007669"/>
    <property type="project" value="TreeGrafter"/>
</dbReference>
<dbReference type="GO" id="GO:0006644">
    <property type="term" value="P:phospholipid metabolic process"/>
    <property type="evidence" value="ECO:0007669"/>
    <property type="project" value="InterPro"/>
</dbReference>
<dbReference type="GO" id="GO:0044398">
    <property type="term" value="P:venom-mediated edema in another organism"/>
    <property type="evidence" value="ECO:0000314"/>
    <property type="project" value="UniProtKB"/>
</dbReference>
<dbReference type="GO" id="GO:0044521">
    <property type="term" value="P:venom-mediated muscle damage in another organism"/>
    <property type="evidence" value="ECO:0000314"/>
    <property type="project" value="UniProtKB"/>
</dbReference>
<dbReference type="GO" id="GO:0044522">
    <property type="term" value="P:venom-mediated myocyte killing in another organism"/>
    <property type="evidence" value="ECO:0000314"/>
    <property type="project" value="UniProtKB"/>
</dbReference>
<dbReference type="CDD" id="cd00125">
    <property type="entry name" value="PLA2c"/>
    <property type="match status" value="1"/>
</dbReference>
<dbReference type="FunFam" id="1.20.90.10:FF:000001">
    <property type="entry name" value="Basic phospholipase A2 homolog"/>
    <property type="match status" value="1"/>
</dbReference>
<dbReference type="Gene3D" id="1.20.90.10">
    <property type="entry name" value="Phospholipase A2 domain"/>
    <property type="match status" value="1"/>
</dbReference>
<dbReference type="InterPro" id="IPR001211">
    <property type="entry name" value="PLipase_A2"/>
</dbReference>
<dbReference type="InterPro" id="IPR033112">
    <property type="entry name" value="PLipase_A2_Asp_AS"/>
</dbReference>
<dbReference type="InterPro" id="IPR016090">
    <property type="entry name" value="PLipase_A2_dom"/>
</dbReference>
<dbReference type="InterPro" id="IPR036444">
    <property type="entry name" value="PLipase_A2_dom_sf"/>
</dbReference>
<dbReference type="InterPro" id="IPR033113">
    <property type="entry name" value="PLipase_A2_His_AS"/>
</dbReference>
<dbReference type="PANTHER" id="PTHR11716">
    <property type="entry name" value="PHOSPHOLIPASE A2 FAMILY MEMBER"/>
    <property type="match status" value="1"/>
</dbReference>
<dbReference type="PANTHER" id="PTHR11716:SF9">
    <property type="entry name" value="PHOSPHOLIPASE A2, MEMBRANE ASSOCIATED"/>
    <property type="match status" value="1"/>
</dbReference>
<dbReference type="Pfam" id="PF00068">
    <property type="entry name" value="Phospholip_A2_1"/>
    <property type="match status" value="1"/>
</dbReference>
<dbReference type="PRINTS" id="PR00389">
    <property type="entry name" value="PHPHLIPASEA2"/>
</dbReference>
<dbReference type="SMART" id="SM00085">
    <property type="entry name" value="PA2c"/>
    <property type="match status" value="1"/>
</dbReference>
<dbReference type="SUPFAM" id="SSF48619">
    <property type="entry name" value="Phospholipase A2, PLA2"/>
    <property type="match status" value="1"/>
</dbReference>
<dbReference type="PROSITE" id="PS00119">
    <property type="entry name" value="PA2_ASP"/>
    <property type="match status" value="1"/>
</dbReference>
<dbReference type="PROSITE" id="PS00118">
    <property type="entry name" value="PA2_HIS"/>
    <property type="match status" value="1"/>
</dbReference>
<proteinExistence type="evidence at protein level"/>
<organism>
    <name type="scientific">Bothrops alternatus</name>
    <name type="common">Urutu</name>
    <name type="synonym">Rhinocerophis alternatus</name>
    <dbReference type="NCBI Taxonomy" id="64174"/>
    <lineage>
        <taxon>Eukaryota</taxon>
        <taxon>Metazoa</taxon>
        <taxon>Chordata</taxon>
        <taxon>Craniata</taxon>
        <taxon>Vertebrata</taxon>
        <taxon>Euteleostomi</taxon>
        <taxon>Lepidosauria</taxon>
        <taxon>Squamata</taxon>
        <taxon>Bifurcata</taxon>
        <taxon>Unidentata</taxon>
        <taxon>Episquamata</taxon>
        <taxon>Toxicofera</taxon>
        <taxon>Serpentes</taxon>
        <taxon>Colubroidea</taxon>
        <taxon>Viperidae</taxon>
        <taxon>Crotalinae</taxon>
        <taxon>Bothrops</taxon>
    </lineage>
</organism>
<sequence>SLFELGKMILQETGKNPAKSYGAYYCYCGWGGQGQPKDATDRCCYVHKCCYKKLTGCNPKKDRYSYSWKDKTIVCGENNSCLKELCECDKAVAICLRENLNTYNKKYRYYLKPLCKKADAC</sequence>
<name>PA2HB_BOTAL</name>
<keyword id="KW-0903">Direct protein sequencing</keyword>
<keyword id="KW-1015">Disulfide bond</keyword>
<keyword id="KW-0959">Myotoxin</keyword>
<keyword id="KW-0528">Neurotoxin</keyword>
<keyword id="KW-0638">Presynaptic neurotoxin</keyword>
<keyword id="KW-0964">Secreted</keyword>
<keyword id="KW-0800">Toxin</keyword>
<comment type="function">
    <text evidence="1 4 5 6">Snake venom phospholipase A2 homolog that lacks enzymatic activity (PubMed:17270350). Is myotoxic and displays edema-inducing activities (PubMed:17270350, PubMed:17915277). In vitro, produced time-dependent, irreversible neuromuscular blockade in isolated mouse phrenic nerve-diaphragm and chick biventer cervicis preparations (PubMed:17270350, PubMed:19463969). A model of myotoxic mechanism has been proposed: an apo Lys49-PLA2 is activated by the entrance of a hydrophobic molecule (e.g. fatty acid) at the hydrophobic channel of the protein leading to a reorientation of a monomer (By similarity). This reorientation causes a transition between 'inactive' to 'active' states, causing alignment of C-terminal and membrane-docking sites (MDoS) side-by-side and putting the membrane-disruption sites (MDiS) in the same plane, exposed to solvent and in a symmetric position for both monomers (By similarity). The MDoS region stabilizes the toxin on membrane by the interaction of charged residues with phospholipid head groups (By similarity). Subsequently, the MDiS region destabilizes the membrane with penetration of hydrophobic residues (By similarity). This insertion causes a disorganization of the membrane, allowing an uncontrolled influx of ions (i.e. calcium and sodium), and eventually triggering irreversible intracellular alterations and cell death (By similarity).</text>
</comment>
<comment type="subunit">
    <text evidence="2">Homodimer; non-covalently linked.</text>
</comment>
<comment type="subcellular location">
    <subcellularLocation>
        <location evidence="4 6">Secreted</location>
    </subcellularLocation>
</comment>
<comment type="tissue specificity">
    <text evidence="10 11">Expressed by the venom gland.</text>
</comment>
<comment type="mass spectrometry"/>
<comment type="toxic dose">
    <text evidence="4">LD(50) is 7 mg/kg by intravenous injection into mice.</text>
</comment>
<comment type="similarity">
    <text evidence="9">Belongs to the phospholipase A2 family. Group II subfamily. K49 sub-subfamily.</text>
</comment>
<comment type="caution">
    <text evidence="9">Does not bind calcium as one of the calcium-binding sites is lost (Asp-&gt;Lys in position 48, which corresponds to 'Lys-49' in the current nomenclature).</text>
</comment>
<reference key="1">
    <citation type="journal article" date="2007" name="Biochim. Biophys. Acta">
        <title>Structural and functional properties of BaTX, a new Lys49 phospholipase A2 homologue isolated from the venom of the snake Bothrops alternatus.</title>
        <authorList>
            <person name="Ponce-Soto L.A."/>
            <person name="Lomonte B."/>
            <person name="Gutierrez J.M."/>
            <person name="Rodrigues-Simioni L."/>
            <person name="Novello J.C."/>
            <person name="Marangoni S."/>
        </authorList>
    </citation>
    <scope>PROTEIN SEQUENCE</scope>
    <scope>FUNCTION</scope>
    <scope>SUBCELLULAR LOCATION</scope>
    <scope>MASS SPECTROMETRY</scope>
    <scope>TOXIC DOSE</scope>
    <source>
        <tissue>Venom</tissue>
    </source>
</reference>
<reference key="2">
    <citation type="journal article" date="2008" name="Toxicon">
        <title>Systemic and local myotoxicity induced by snake venom group II phospholipases A2: comparison between crotoxin, crotoxin B and a Lys49 PLA2 homologue.</title>
        <authorList>
            <person name="Gutierrez J.M."/>
            <person name="Ponce-Soto L.A."/>
            <person name="Marangoni S."/>
            <person name="Lomonte B."/>
        </authorList>
    </citation>
    <scope>FUNCTION</scope>
    <source>
        <tissue>Venom</tissue>
    </source>
</reference>
<reference key="3">
    <citation type="journal article" date="2009" name="Comp. Biochem. Physiol.">
        <title>Neuromuscular activity of BaTX, a presynaptic basic PLA2 isolated from Bothrops alternatus snake venom.</title>
        <authorList>
            <person name="Ponce-Soto L.A."/>
            <person name="Barros J.C."/>
            <person name="Marangoni S."/>
            <person name="Hernandez S."/>
            <person name="Dal Belo C.A."/>
            <person name="Corrado A.P."/>
            <person name="Hyslop S."/>
            <person name="Rodrigues-Simioni L."/>
        </authorList>
    </citation>
    <scope>IDENTIFICATION BY MASS SPECTROMETRY</scope>
    <scope>FUNCTION</scope>
    <scope>SUBCELLULAR LOCATION</scope>
    <source>
        <tissue>Venom</tissue>
    </source>
</reference>